<comment type="interaction">
    <interactant intactId="EBI-13322423">
        <id>Q96L03</id>
    </interactant>
    <interactant intactId="EBI-1049597">
        <id>P27797</id>
        <label>CALR</label>
    </interactant>
    <organismsDiffer>false</organismsDiffer>
    <experiments>3</experiments>
</comment>
<comment type="interaction">
    <interactant intactId="EBI-13322423">
        <id>Q96L03</id>
    </interactant>
    <interactant intactId="EBI-351007">
        <id>P36957</id>
        <label>DLST</label>
    </interactant>
    <organismsDiffer>false</organismsDiffer>
    <experiments>3</experiments>
</comment>
<comment type="interaction">
    <interactant intactId="EBI-13322423">
        <id>Q96L03</id>
    </interactant>
    <interactant intactId="EBI-2509999">
        <id>Q8NB78</id>
        <label>KDM1B</label>
    </interactant>
    <organismsDiffer>false</organismsDiffer>
    <experiments>2</experiments>
</comment>
<comment type="interaction">
    <interactant intactId="EBI-13322423">
        <id>Q96L03</id>
    </interactant>
    <interactant intactId="EBI-1055945">
        <id>Q8TDX7</id>
        <label>NEK7</label>
    </interactant>
    <organismsDiffer>false</organismsDiffer>
    <experiments>3</experiments>
</comment>
<comment type="interaction">
    <interactant intactId="EBI-13322423">
        <id>Q96L03</id>
    </interactant>
    <interactant intactId="EBI-749248">
        <id>Q8N131</id>
        <label>TMEM123</label>
    </interactant>
    <organismsDiffer>false</organismsDiffer>
    <experiments>3</experiments>
</comment>
<comment type="subcellular location">
    <subcellularLocation>
        <location evidence="1">Cytoplasm</location>
    </subcellularLocation>
</comment>
<sequence length="361" mass="43499">MATLARLQARSSTVGNQYYFRNSVVDPFRKKENDAAVKIQSWFRGCQVRAYIRHLNRIVTIIQKWWRSFLGRKQYQLTVQVAYYTMMMNLYNAMAVRIQRRWRGYRVRKYLFNYYYLKEYLKVVSETNDAIRKALEEFAEMKEREEKKANLEREEKKRDYQARKMHYLLSTKQIPGIYNSPFRKEPDPWELQLQKAKPLTHRRPKVKQKDSTSLTDWLACTSARSFPRSEILPPINRKQCQGPFRDITEVLEQRYRPLEPTLRVAEPIDELKLAREELRREEWLQNVNDNMFLPFSSYHKNEKYIPSMHLSSKYGPISYKEQFRSENPKKWICDKDFQTVLPSFELFSKYGKLYSKAGQIV</sequence>
<dbReference type="EMBL" id="AY963797">
    <property type="protein sequence ID" value="AAY33662.1"/>
    <property type="molecule type" value="mRNA"/>
</dbReference>
<dbReference type="EMBL" id="AK098591">
    <property type="protein sequence ID" value="BAC05343.1"/>
    <property type="molecule type" value="mRNA"/>
</dbReference>
<dbReference type="EMBL" id="AC097061">
    <property type="status" value="NOT_ANNOTATED_CDS"/>
    <property type="molecule type" value="Genomic_DNA"/>
</dbReference>
<dbReference type="EMBL" id="AL354659">
    <property type="status" value="NOT_ANNOTATED_CDS"/>
    <property type="molecule type" value="Genomic_DNA"/>
</dbReference>
<dbReference type="EMBL" id="AL445428">
    <property type="status" value="NOT_ANNOTATED_CDS"/>
    <property type="molecule type" value="Genomic_DNA"/>
</dbReference>
<dbReference type="EMBL" id="CH471100">
    <property type="protein sequence ID" value="EAW93332.1"/>
    <property type="molecule type" value="Genomic_DNA"/>
</dbReference>
<dbReference type="EMBL" id="BC014608">
    <property type="protein sequence ID" value="AAH14608.1"/>
    <property type="molecule type" value="mRNA"/>
</dbReference>
<dbReference type="CCDS" id="CCDS1519.1"/>
<dbReference type="RefSeq" id="NP_001362584.1">
    <property type="nucleotide sequence ID" value="NM_001375655.1"/>
</dbReference>
<dbReference type="RefSeq" id="NP_620151.1">
    <property type="nucleotide sequence ID" value="NM_138796.4"/>
</dbReference>
<dbReference type="RefSeq" id="XP_005273109.1">
    <property type="nucleotide sequence ID" value="XM_005273052.1"/>
</dbReference>
<dbReference type="SMR" id="Q96L03"/>
<dbReference type="BioGRID" id="126095">
    <property type="interactions" value="6"/>
</dbReference>
<dbReference type="FunCoup" id="Q96L03">
    <property type="interactions" value="38"/>
</dbReference>
<dbReference type="IntAct" id="Q96L03">
    <property type="interactions" value="5"/>
</dbReference>
<dbReference type="STRING" id="9606.ENSP00000355900"/>
<dbReference type="iPTMnet" id="Q96L03"/>
<dbReference type="PhosphoSitePlus" id="Q96L03"/>
<dbReference type="BioMuta" id="SPATA17"/>
<dbReference type="DMDM" id="74751996"/>
<dbReference type="jPOST" id="Q96L03"/>
<dbReference type="MassIVE" id="Q96L03"/>
<dbReference type="PaxDb" id="9606-ENSP00000355900"/>
<dbReference type="PeptideAtlas" id="Q96L03"/>
<dbReference type="ProteomicsDB" id="77131"/>
<dbReference type="Antibodypedia" id="34622">
    <property type="antibodies" value="54 antibodies from 19 providers"/>
</dbReference>
<dbReference type="DNASU" id="128153"/>
<dbReference type="Ensembl" id="ENST00000366933.5">
    <property type="protein sequence ID" value="ENSP00000355900.4"/>
    <property type="gene ID" value="ENSG00000162814.11"/>
</dbReference>
<dbReference type="GeneID" id="128153"/>
<dbReference type="KEGG" id="hsa:128153"/>
<dbReference type="MANE-Select" id="ENST00000366933.5">
    <property type="protein sequence ID" value="ENSP00000355900.4"/>
    <property type="RefSeq nucleotide sequence ID" value="NM_138796.4"/>
    <property type="RefSeq protein sequence ID" value="NP_620151.1"/>
</dbReference>
<dbReference type="UCSC" id="uc001hlh.2">
    <property type="organism name" value="human"/>
</dbReference>
<dbReference type="AGR" id="HGNC:25184"/>
<dbReference type="CTD" id="128153"/>
<dbReference type="DisGeNET" id="128153"/>
<dbReference type="GeneCards" id="SPATA17"/>
<dbReference type="HGNC" id="HGNC:25184">
    <property type="gene designation" value="SPATA17"/>
</dbReference>
<dbReference type="HPA" id="ENSG00000162814">
    <property type="expression patterns" value="Tissue enhanced (testis)"/>
</dbReference>
<dbReference type="MIM" id="611032">
    <property type="type" value="gene"/>
</dbReference>
<dbReference type="neXtProt" id="NX_Q96L03"/>
<dbReference type="OpenTargets" id="ENSG00000162814"/>
<dbReference type="PharmGKB" id="PA144596270"/>
<dbReference type="VEuPathDB" id="HostDB:ENSG00000162814"/>
<dbReference type="eggNOG" id="ENOG502QS0S">
    <property type="taxonomic scope" value="Eukaryota"/>
</dbReference>
<dbReference type="GeneTree" id="ENSGT00390000011270"/>
<dbReference type="HOGENOM" id="CLU_044264_0_0_1"/>
<dbReference type="InParanoid" id="Q96L03"/>
<dbReference type="OMA" id="LHTTSKY"/>
<dbReference type="OrthoDB" id="190375at2759"/>
<dbReference type="PAN-GO" id="Q96L03">
    <property type="GO annotations" value="1 GO annotation based on evolutionary models"/>
</dbReference>
<dbReference type="PhylomeDB" id="Q96L03"/>
<dbReference type="TreeFam" id="TF329213"/>
<dbReference type="PathwayCommons" id="Q96L03"/>
<dbReference type="SignaLink" id="Q96L03"/>
<dbReference type="BioGRID-ORCS" id="128153">
    <property type="hits" value="14 hits in 1145 CRISPR screens"/>
</dbReference>
<dbReference type="ChiTaRS" id="SPATA17">
    <property type="organism name" value="human"/>
</dbReference>
<dbReference type="GenomeRNAi" id="128153"/>
<dbReference type="Pharos" id="Q96L03">
    <property type="development level" value="Tbio"/>
</dbReference>
<dbReference type="PRO" id="PR:Q96L03"/>
<dbReference type="Proteomes" id="UP000005640">
    <property type="component" value="Chromosome 1"/>
</dbReference>
<dbReference type="RNAct" id="Q96L03">
    <property type="molecule type" value="protein"/>
</dbReference>
<dbReference type="Bgee" id="ENSG00000162814">
    <property type="expression patterns" value="Expressed in sperm and 106 other cell types or tissues"/>
</dbReference>
<dbReference type="ExpressionAtlas" id="Q96L03">
    <property type="expression patterns" value="baseline and differential"/>
</dbReference>
<dbReference type="GO" id="GO:0005737">
    <property type="term" value="C:cytoplasm"/>
    <property type="evidence" value="ECO:0007669"/>
    <property type="project" value="UniProtKB-SubCell"/>
</dbReference>
<dbReference type="GO" id="GO:0005516">
    <property type="term" value="F:calmodulin binding"/>
    <property type="evidence" value="ECO:0007669"/>
    <property type="project" value="UniProtKB-KW"/>
</dbReference>
<dbReference type="Gene3D" id="1.20.5.190">
    <property type="match status" value="2"/>
</dbReference>
<dbReference type="InterPro" id="IPR051185">
    <property type="entry name" value="ASPM"/>
</dbReference>
<dbReference type="InterPro" id="IPR000048">
    <property type="entry name" value="IQ_motif_EF-hand-BS"/>
</dbReference>
<dbReference type="InterPro" id="IPR027417">
    <property type="entry name" value="P-loop_NTPase"/>
</dbReference>
<dbReference type="PANTHER" id="PTHR22706">
    <property type="entry name" value="ASSEMBLY FACTOR FOR SPINDLE MICROTUBULES"/>
    <property type="match status" value="1"/>
</dbReference>
<dbReference type="PANTHER" id="PTHR22706:SF1">
    <property type="entry name" value="ASSEMBLY FACTOR FOR SPINDLE MICROTUBULES"/>
    <property type="match status" value="1"/>
</dbReference>
<dbReference type="Pfam" id="PF00612">
    <property type="entry name" value="IQ"/>
    <property type="match status" value="3"/>
</dbReference>
<dbReference type="SMART" id="SM00015">
    <property type="entry name" value="IQ"/>
    <property type="match status" value="3"/>
</dbReference>
<dbReference type="SUPFAM" id="SSF52540">
    <property type="entry name" value="P-loop containing nucleoside triphosphate hydrolases"/>
    <property type="match status" value="1"/>
</dbReference>
<dbReference type="PROSITE" id="PS50096">
    <property type="entry name" value="IQ"/>
    <property type="match status" value="3"/>
</dbReference>
<reference key="1">
    <citation type="submission" date="2005-03" db="EMBL/GenBank/DDBJ databases">
        <title>Molecular cloning of HSRG-11 gene related to apoptosis of spermatogenic cells.</title>
        <authorList>
            <person name="Deng Y."/>
            <person name="Lu G.-X."/>
        </authorList>
    </citation>
    <scope>NUCLEOTIDE SEQUENCE [MRNA]</scope>
    <source>
        <tissue>Testis</tissue>
    </source>
</reference>
<reference key="2">
    <citation type="journal article" date="2004" name="Nat. Genet.">
        <title>Complete sequencing and characterization of 21,243 full-length human cDNAs.</title>
        <authorList>
            <person name="Ota T."/>
            <person name="Suzuki Y."/>
            <person name="Nishikawa T."/>
            <person name="Otsuki T."/>
            <person name="Sugiyama T."/>
            <person name="Irie R."/>
            <person name="Wakamatsu A."/>
            <person name="Hayashi K."/>
            <person name="Sato H."/>
            <person name="Nagai K."/>
            <person name="Kimura K."/>
            <person name="Makita H."/>
            <person name="Sekine M."/>
            <person name="Obayashi M."/>
            <person name="Nishi T."/>
            <person name="Shibahara T."/>
            <person name="Tanaka T."/>
            <person name="Ishii S."/>
            <person name="Yamamoto J."/>
            <person name="Saito K."/>
            <person name="Kawai Y."/>
            <person name="Isono Y."/>
            <person name="Nakamura Y."/>
            <person name="Nagahari K."/>
            <person name="Murakami K."/>
            <person name="Yasuda T."/>
            <person name="Iwayanagi T."/>
            <person name="Wagatsuma M."/>
            <person name="Shiratori A."/>
            <person name="Sudo H."/>
            <person name="Hosoiri T."/>
            <person name="Kaku Y."/>
            <person name="Kodaira H."/>
            <person name="Kondo H."/>
            <person name="Sugawara M."/>
            <person name="Takahashi M."/>
            <person name="Kanda K."/>
            <person name="Yokoi T."/>
            <person name="Furuya T."/>
            <person name="Kikkawa E."/>
            <person name="Omura Y."/>
            <person name="Abe K."/>
            <person name="Kamihara K."/>
            <person name="Katsuta N."/>
            <person name="Sato K."/>
            <person name="Tanikawa M."/>
            <person name="Yamazaki M."/>
            <person name="Ninomiya K."/>
            <person name="Ishibashi T."/>
            <person name="Yamashita H."/>
            <person name="Murakawa K."/>
            <person name="Fujimori K."/>
            <person name="Tanai H."/>
            <person name="Kimata M."/>
            <person name="Watanabe M."/>
            <person name="Hiraoka S."/>
            <person name="Chiba Y."/>
            <person name="Ishida S."/>
            <person name="Ono Y."/>
            <person name="Takiguchi S."/>
            <person name="Watanabe S."/>
            <person name="Yosida M."/>
            <person name="Hotuta T."/>
            <person name="Kusano J."/>
            <person name="Kanehori K."/>
            <person name="Takahashi-Fujii A."/>
            <person name="Hara H."/>
            <person name="Tanase T.-O."/>
            <person name="Nomura Y."/>
            <person name="Togiya S."/>
            <person name="Komai F."/>
            <person name="Hara R."/>
            <person name="Takeuchi K."/>
            <person name="Arita M."/>
            <person name="Imose N."/>
            <person name="Musashino K."/>
            <person name="Yuuki H."/>
            <person name="Oshima A."/>
            <person name="Sasaki N."/>
            <person name="Aotsuka S."/>
            <person name="Yoshikawa Y."/>
            <person name="Matsunawa H."/>
            <person name="Ichihara T."/>
            <person name="Shiohata N."/>
            <person name="Sano S."/>
            <person name="Moriya S."/>
            <person name="Momiyama H."/>
            <person name="Satoh N."/>
            <person name="Takami S."/>
            <person name="Terashima Y."/>
            <person name="Suzuki O."/>
            <person name="Nakagawa S."/>
            <person name="Senoh A."/>
            <person name="Mizoguchi H."/>
            <person name="Goto Y."/>
            <person name="Shimizu F."/>
            <person name="Wakebe H."/>
            <person name="Hishigaki H."/>
            <person name="Watanabe T."/>
            <person name="Sugiyama A."/>
            <person name="Takemoto M."/>
            <person name="Kawakami B."/>
            <person name="Yamazaki M."/>
            <person name="Watanabe K."/>
            <person name="Kumagai A."/>
            <person name="Itakura S."/>
            <person name="Fukuzumi Y."/>
            <person name="Fujimori Y."/>
            <person name="Komiyama M."/>
            <person name="Tashiro H."/>
            <person name="Tanigami A."/>
            <person name="Fujiwara T."/>
            <person name="Ono T."/>
            <person name="Yamada K."/>
            <person name="Fujii Y."/>
            <person name="Ozaki K."/>
            <person name="Hirao M."/>
            <person name="Ohmori Y."/>
            <person name="Kawabata A."/>
            <person name="Hikiji T."/>
            <person name="Kobatake N."/>
            <person name="Inagaki H."/>
            <person name="Ikema Y."/>
            <person name="Okamoto S."/>
            <person name="Okitani R."/>
            <person name="Kawakami T."/>
            <person name="Noguchi S."/>
            <person name="Itoh T."/>
            <person name="Shigeta K."/>
            <person name="Senba T."/>
            <person name="Matsumura K."/>
            <person name="Nakajima Y."/>
            <person name="Mizuno T."/>
            <person name="Morinaga M."/>
            <person name="Sasaki M."/>
            <person name="Togashi T."/>
            <person name="Oyama M."/>
            <person name="Hata H."/>
            <person name="Watanabe M."/>
            <person name="Komatsu T."/>
            <person name="Mizushima-Sugano J."/>
            <person name="Satoh T."/>
            <person name="Shirai Y."/>
            <person name="Takahashi Y."/>
            <person name="Nakagawa K."/>
            <person name="Okumura K."/>
            <person name="Nagase T."/>
            <person name="Nomura N."/>
            <person name="Kikuchi H."/>
            <person name="Masuho Y."/>
            <person name="Yamashita R."/>
            <person name="Nakai K."/>
            <person name="Yada T."/>
            <person name="Nakamura Y."/>
            <person name="Ohara O."/>
            <person name="Isogai T."/>
            <person name="Sugano S."/>
        </authorList>
    </citation>
    <scope>NUCLEOTIDE SEQUENCE [LARGE SCALE MRNA]</scope>
    <source>
        <tissue>Testis</tissue>
    </source>
</reference>
<reference key="3">
    <citation type="journal article" date="2006" name="Nature">
        <title>The DNA sequence and biological annotation of human chromosome 1.</title>
        <authorList>
            <person name="Gregory S.G."/>
            <person name="Barlow K.F."/>
            <person name="McLay K.E."/>
            <person name="Kaul R."/>
            <person name="Swarbreck D."/>
            <person name="Dunham A."/>
            <person name="Scott C.E."/>
            <person name="Howe K.L."/>
            <person name="Woodfine K."/>
            <person name="Spencer C.C.A."/>
            <person name="Jones M.C."/>
            <person name="Gillson C."/>
            <person name="Searle S."/>
            <person name="Zhou Y."/>
            <person name="Kokocinski F."/>
            <person name="McDonald L."/>
            <person name="Evans R."/>
            <person name="Phillips K."/>
            <person name="Atkinson A."/>
            <person name="Cooper R."/>
            <person name="Jones C."/>
            <person name="Hall R.E."/>
            <person name="Andrews T.D."/>
            <person name="Lloyd C."/>
            <person name="Ainscough R."/>
            <person name="Almeida J.P."/>
            <person name="Ambrose K.D."/>
            <person name="Anderson F."/>
            <person name="Andrew R.W."/>
            <person name="Ashwell R.I.S."/>
            <person name="Aubin K."/>
            <person name="Babbage A.K."/>
            <person name="Bagguley C.L."/>
            <person name="Bailey J."/>
            <person name="Beasley H."/>
            <person name="Bethel G."/>
            <person name="Bird C.P."/>
            <person name="Bray-Allen S."/>
            <person name="Brown J.Y."/>
            <person name="Brown A.J."/>
            <person name="Buckley D."/>
            <person name="Burton J."/>
            <person name="Bye J."/>
            <person name="Carder C."/>
            <person name="Chapman J.C."/>
            <person name="Clark S.Y."/>
            <person name="Clarke G."/>
            <person name="Clee C."/>
            <person name="Cobley V."/>
            <person name="Collier R.E."/>
            <person name="Corby N."/>
            <person name="Coville G.J."/>
            <person name="Davies J."/>
            <person name="Deadman R."/>
            <person name="Dunn M."/>
            <person name="Earthrowl M."/>
            <person name="Ellington A.G."/>
            <person name="Errington H."/>
            <person name="Frankish A."/>
            <person name="Frankland J."/>
            <person name="French L."/>
            <person name="Garner P."/>
            <person name="Garnett J."/>
            <person name="Gay L."/>
            <person name="Ghori M.R.J."/>
            <person name="Gibson R."/>
            <person name="Gilby L.M."/>
            <person name="Gillett W."/>
            <person name="Glithero R.J."/>
            <person name="Grafham D.V."/>
            <person name="Griffiths C."/>
            <person name="Griffiths-Jones S."/>
            <person name="Grocock R."/>
            <person name="Hammond S."/>
            <person name="Harrison E.S.I."/>
            <person name="Hart E."/>
            <person name="Haugen E."/>
            <person name="Heath P.D."/>
            <person name="Holmes S."/>
            <person name="Holt K."/>
            <person name="Howden P.J."/>
            <person name="Hunt A.R."/>
            <person name="Hunt S.E."/>
            <person name="Hunter G."/>
            <person name="Isherwood J."/>
            <person name="James R."/>
            <person name="Johnson C."/>
            <person name="Johnson D."/>
            <person name="Joy A."/>
            <person name="Kay M."/>
            <person name="Kershaw J.K."/>
            <person name="Kibukawa M."/>
            <person name="Kimberley A.M."/>
            <person name="King A."/>
            <person name="Knights A.J."/>
            <person name="Lad H."/>
            <person name="Laird G."/>
            <person name="Lawlor S."/>
            <person name="Leongamornlert D.A."/>
            <person name="Lloyd D.M."/>
            <person name="Loveland J."/>
            <person name="Lovell J."/>
            <person name="Lush M.J."/>
            <person name="Lyne R."/>
            <person name="Martin S."/>
            <person name="Mashreghi-Mohammadi M."/>
            <person name="Matthews L."/>
            <person name="Matthews N.S.W."/>
            <person name="McLaren S."/>
            <person name="Milne S."/>
            <person name="Mistry S."/>
            <person name="Moore M.J.F."/>
            <person name="Nickerson T."/>
            <person name="O'Dell C.N."/>
            <person name="Oliver K."/>
            <person name="Palmeiri A."/>
            <person name="Palmer S.A."/>
            <person name="Parker A."/>
            <person name="Patel D."/>
            <person name="Pearce A.V."/>
            <person name="Peck A.I."/>
            <person name="Pelan S."/>
            <person name="Phelps K."/>
            <person name="Phillimore B.J."/>
            <person name="Plumb R."/>
            <person name="Rajan J."/>
            <person name="Raymond C."/>
            <person name="Rouse G."/>
            <person name="Saenphimmachak C."/>
            <person name="Sehra H.K."/>
            <person name="Sheridan E."/>
            <person name="Shownkeen R."/>
            <person name="Sims S."/>
            <person name="Skuce C.D."/>
            <person name="Smith M."/>
            <person name="Steward C."/>
            <person name="Subramanian S."/>
            <person name="Sycamore N."/>
            <person name="Tracey A."/>
            <person name="Tromans A."/>
            <person name="Van Helmond Z."/>
            <person name="Wall M."/>
            <person name="Wallis J.M."/>
            <person name="White S."/>
            <person name="Whitehead S.L."/>
            <person name="Wilkinson J.E."/>
            <person name="Willey D.L."/>
            <person name="Williams H."/>
            <person name="Wilming L."/>
            <person name="Wray P.W."/>
            <person name="Wu Z."/>
            <person name="Coulson A."/>
            <person name="Vaudin M."/>
            <person name="Sulston J.E."/>
            <person name="Durbin R.M."/>
            <person name="Hubbard T."/>
            <person name="Wooster R."/>
            <person name="Dunham I."/>
            <person name="Carter N.P."/>
            <person name="McVean G."/>
            <person name="Ross M.T."/>
            <person name="Harrow J."/>
            <person name="Olson M.V."/>
            <person name="Beck S."/>
            <person name="Rogers J."/>
            <person name="Bentley D.R."/>
        </authorList>
    </citation>
    <scope>NUCLEOTIDE SEQUENCE [LARGE SCALE GENOMIC DNA]</scope>
</reference>
<reference key="4">
    <citation type="submission" date="2005-09" db="EMBL/GenBank/DDBJ databases">
        <authorList>
            <person name="Mural R.J."/>
            <person name="Istrail S."/>
            <person name="Sutton G."/>
            <person name="Florea L."/>
            <person name="Halpern A.L."/>
            <person name="Mobarry C.M."/>
            <person name="Lippert R."/>
            <person name="Walenz B."/>
            <person name="Shatkay H."/>
            <person name="Dew I."/>
            <person name="Miller J.R."/>
            <person name="Flanigan M.J."/>
            <person name="Edwards N.J."/>
            <person name="Bolanos R."/>
            <person name="Fasulo D."/>
            <person name="Halldorsson B.V."/>
            <person name="Hannenhalli S."/>
            <person name="Turner R."/>
            <person name="Yooseph S."/>
            <person name="Lu F."/>
            <person name="Nusskern D.R."/>
            <person name="Shue B.C."/>
            <person name="Zheng X.H."/>
            <person name="Zhong F."/>
            <person name="Delcher A.L."/>
            <person name="Huson D.H."/>
            <person name="Kravitz S.A."/>
            <person name="Mouchard L."/>
            <person name="Reinert K."/>
            <person name="Remington K.A."/>
            <person name="Clark A.G."/>
            <person name="Waterman M.S."/>
            <person name="Eichler E.E."/>
            <person name="Adams M.D."/>
            <person name="Hunkapiller M.W."/>
            <person name="Myers E.W."/>
            <person name="Venter J.C."/>
        </authorList>
    </citation>
    <scope>NUCLEOTIDE SEQUENCE [LARGE SCALE GENOMIC DNA]</scope>
</reference>
<reference key="5">
    <citation type="journal article" date="2004" name="Genome Res.">
        <title>The status, quality, and expansion of the NIH full-length cDNA project: the Mammalian Gene Collection (MGC).</title>
        <authorList>
            <consortium name="The MGC Project Team"/>
        </authorList>
    </citation>
    <scope>NUCLEOTIDE SEQUENCE [LARGE SCALE MRNA]</scope>
    <source>
        <tissue>Testis</tissue>
    </source>
</reference>
<name>SPT17_HUMAN</name>
<keyword id="KW-0112">Calmodulin-binding</keyword>
<keyword id="KW-0963">Cytoplasm</keyword>
<keyword id="KW-1267">Proteomics identification</keyword>
<keyword id="KW-1185">Reference proteome</keyword>
<keyword id="KW-0677">Repeat</keyword>
<proteinExistence type="evidence at protein level"/>
<organism>
    <name type="scientific">Homo sapiens</name>
    <name type="common">Human</name>
    <dbReference type="NCBI Taxonomy" id="9606"/>
    <lineage>
        <taxon>Eukaryota</taxon>
        <taxon>Metazoa</taxon>
        <taxon>Chordata</taxon>
        <taxon>Craniata</taxon>
        <taxon>Vertebrata</taxon>
        <taxon>Euteleostomi</taxon>
        <taxon>Mammalia</taxon>
        <taxon>Eutheria</taxon>
        <taxon>Euarchontoglires</taxon>
        <taxon>Primates</taxon>
        <taxon>Haplorrhini</taxon>
        <taxon>Catarrhini</taxon>
        <taxon>Hominidae</taxon>
        <taxon>Homo</taxon>
    </lineage>
</organism>
<accession>Q96L03</accession>
<accession>A5D6N2</accession>
<feature type="chain" id="PRO_0000265933" description="Spermatogenesis-associated protein 17">
    <location>
        <begin position="1"/>
        <end position="361"/>
    </location>
</feature>
<feature type="domain" description="IQ 1" evidence="2">
    <location>
        <begin position="32"/>
        <end position="61"/>
    </location>
</feature>
<feature type="domain" description="IQ 2" evidence="2">
    <location>
        <begin position="55"/>
        <end position="84"/>
    </location>
</feature>
<feature type="domain" description="IQ 3" evidence="2">
    <location>
        <begin position="91"/>
        <end position="120"/>
    </location>
</feature>
<feature type="sequence variant" id="VAR_051382" description="In dbSNP:rs34652544.">
    <original>N</original>
    <variation>S</variation>
    <location>
        <position position="16"/>
    </location>
</feature>
<protein>
    <recommendedName>
        <fullName>Spermatogenesis-associated protein 17</fullName>
    </recommendedName>
</protein>
<gene>
    <name type="primary">SPATA17</name>
</gene>
<evidence type="ECO:0000250" key="1"/>
<evidence type="ECO:0000255" key="2">
    <source>
        <dbReference type="PROSITE-ProRule" id="PRU00116"/>
    </source>
</evidence>